<accession>O87385</accession>
<protein>
    <recommendedName>
        <fullName evidence="1">Chaperone protein DnaJ</fullName>
    </recommendedName>
</protein>
<name>DNAJ_VIBHA</name>
<evidence type="ECO:0000255" key="1">
    <source>
        <dbReference type="HAMAP-Rule" id="MF_01152"/>
    </source>
</evidence>
<organism>
    <name type="scientific">Vibrio harveyi</name>
    <name type="common">Beneckea harveyi</name>
    <dbReference type="NCBI Taxonomy" id="669"/>
    <lineage>
        <taxon>Bacteria</taxon>
        <taxon>Pseudomonadati</taxon>
        <taxon>Pseudomonadota</taxon>
        <taxon>Gammaproteobacteria</taxon>
        <taxon>Vibrionales</taxon>
        <taxon>Vibrionaceae</taxon>
        <taxon>Vibrio</taxon>
    </lineage>
</organism>
<gene>
    <name evidence="1" type="primary">dnaJ</name>
</gene>
<proteinExistence type="inferred from homology"/>
<feature type="chain" id="PRO_0000070929" description="Chaperone protein DnaJ">
    <location>
        <begin position="1"/>
        <end position="385"/>
    </location>
</feature>
<feature type="domain" description="J" evidence="1">
    <location>
        <begin position="5"/>
        <end position="70"/>
    </location>
</feature>
<feature type="repeat" description="CXXCXGXG motif">
    <location>
        <begin position="150"/>
        <end position="157"/>
    </location>
</feature>
<feature type="repeat" description="CXXCXGXG motif">
    <location>
        <begin position="167"/>
        <end position="174"/>
    </location>
</feature>
<feature type="repeat" description="CXXCXGXG motif">
    <location>
        <begin position="189"/>
        <end position="196"/>
    </location>
</feature>
<feature type="repeat" description="CXXCXGXG motif">
    <location>
        <begin position="202"/>
        <end position="209"/>
    </location>
</feature>
<feature type="zinc finger region" description="CR-type" evidence="1">
    <location>
        <begin position="137"/>
        <end position="214"/>
    </location>
</feature>
<feature type="binding site" evidence="1">
    <location>
        <position position="150"/>
    </location>
    <ligand>
        <name>Zn(2+)</name>
        <dbReference type="ChEBI" id="CHEBI:29105"/>
        <label>1</label>
    </ligand>
</feature>
<feature type="binding site" evidence="1">
    <location>
        <position position="153"/>
    </location>
    <ligand>
        <name>Zn(2+)</name>
        <dbReference type="ChEBI" id="CHEBI:29105"/>
        <label>1</label>
    </ligand>
</feature>
<feature type="binding site" evidence="1">
    <location>
        <position position="167"/>
    </location>
    <ligand>
        <name>Zn(2+)</name>
        <dbReference type="ChEBI" id="CHEBI:29105"/>
        <label>2</label>
    </ligand>
</feature>
<feature type="binding site" evidence="1">
    <location>
        <position position="170"/>
    </location>
    <ligand>
        <name>Zn(2+)</name>
        <dbReference type="ChEBI" id="CHEBI:29105"/>
        <label>2</label>
    </ligand>
</feature>
<feature type="binding site" evidence="1">
    <location>
        <position position="189"/>
    </location>
    <ligand>
        <name>Zn(2+)</name>
        <dbReference type="ChEBI" id="CHEBI:29105"/>
        <label>2</label>
    </ligand>
</feature>
<feature type="binding site" evidence="1">
    <location>
        <position position="192"/>
    </location>
    <ligand>
        <name>Zn(2+)</name>
        <dbReference type="ChEBI" id="CHEBI:29105"/>
        <label>2</label>
    </ligand>
</feature>
<feature type="binding site" evidence="1">
    <location>
        <position position="202"/>
    </location>
    <ligand>
        <name>Zn(2+)</name>
        <dbReference type="ChEBI" id="CHEBI:29105"/>
        <label>1</label>
    </ligand>
</feature>
<feature type="binding site" evidence="1">
    <location>
        <position position="205"/>
    </location>
    <ligand>
        <name>Zn(2+)</name>
        <dbReference type="ChEBI" id="CHEBI:29105"/>
        <label>1</label>
    </ligand>
</feature>
<comment type="function">
    <text evidence="1">Participates actively in the response to hyperosmotic and heat shock by preventing the aggregation of stress-denatured proteins and by disaggregating proteins, also in an autonomous, DnaK-independent fashion. Unfolded proteins bind initially to DnaJ; upon interaction with the DnaJ-bound protein, DnaK hydrolyzes its bound ATP, resulting in the formation of a stable complex. GrpE releases ADP from DnaK; ATP binding to DnaK triggers the release of the substrate protein, thus completing the reaction cycle. Several rounds of ATP-dependent interactions between DnaJ, DnaK and GrpE are required for fully efficient folding. Also involved, together with DnaK and GrpE, in the DNA replication of plasmids through activation of initiation proteins.</text>
</comment>
<comment type="cofactor">
    <cofactor evidence="1">
        <name>Zn(2+)</name>
        <dbReference type="ChEBI" id="CHEBI:29105"/>
    </cofactor>
    <text evidence="1">Binds 2 Zn(2+) ions per monomer.</text>
</comment>
<comment type="subunit">
    <text evidence="1">Homodimer.</text>
</comment>
<comment type="subcellular location">
    <subcellularLocation>
        <location evidence="1">Cytoplasm</location>
    </subcellularLocation>
</comment>
<comment type="domain">
    <text evidence="1">The J domain is necessary and sufficient to stimulate DnaK ATPase activity. Zinc center 1 plays an important role in the autonomous, DnaK-independent chaperone activity of DnaJ. Zinc center 2 is essential for interaction with DnaK and for DnaJ activity.</text>
</comment>
<comment type="similarity">
    <text evidence="1">Belongs to the DnaJ family.</text>
</comment>
<keyword id="KW-0143">Chaperone</keyword>
<keyword id="KW-0963">Cytoplasm</keyword>
<keyword id="KW-0235">DNA replication</keyword>
<keyword id="KW-0479">Metal-binding</keyword>
<keyword id="KW-0677">Repeat</keyword>
<keyword id="KW-0346">Stress response</keyword>
<keyword id="KW-0862">Zinc</keyword>
<keyword id="KW-0863">Zinc-finger</keyword>
<sequence>MSKRDFYEVLGVSRDASERDIKKAYKRLAMKYHPDRNQGDESAADKFKEVKESYEILTDPQKKAAYDQYGHAAFEQGGGGFGGGGFGGGGADFGDIFGDVFGDIFGGGRRGGGQQRAQRGADLRYNMELSLEEAVRGVSKEIEVPTLVHCDTCDGSGAKKGSSAETCGTCHGHGQVQMRQGFFAVQQTCPTCHGKGKIIRPCNECHGQGRKQKTKTLNVKIPAGVDTGDRIRLSGEGERGEMGAPAGDLYVQVHVKEHHIFEREGNNLYCEVPVSFLMACSMAALGGEVEVPTLDGRVNLKVPTETRAGRMFRMRGKGVKGVRGGGVGDLIVKLVVETPVNLSARQKELLKEFDESCGGDAQLSTNQNLKGFFNGVKKFFDDLTS</sequence>
<dbReference type="EMBL" id="AY639008">
    <property type="protein sequence ID" value="AAT39537.1"/>
    <property type="molecule type" value="Genomic_DNA"/>
</dbReference>
<dbReference type="SMR" id="O87385"/>
<dbReference type="STRING" id="669.AL538_12735"/>
<dbReference type="GO" id="GO:0005737">
    <property type="term" value="C:cytoplasm"/>
    <property type="evidence" value="ECO:0007669"/>
    <property type="project" value="UniProtKB-SubCell"/>
</dbReference>
<dbReference type="GO" id="GO:0005524">
    <property type="term" value="F:ATP binding"/>
    <property type="evidence" value="ECO:0007669"/>
    <property type="project" value="InterPro"/>
</dbReference>
<dbReference type="GO" id="GO:0031072">
    <property type="term" value="F:heat shock protein binding"/>
    <property type="evidence" value="ECO:0007669"/>
    <property type="project" value="InterPro"/>
</dbReference>
<dbReference type="GO" id="GO:0051082">
    <property type="term" value="F:unfolded protein binding"/>
    <property type="evidence" value="ECO:0007669"/>
    <property type="project" value="UniProtKB-UniRule"/>
</dbReference>
<dbReference type="GO" id="GO:0008270">
    <property type="term" value="F:zinc ion binding"/>
    <property type="evidence" value="ECO:0007669"/>
    <property type="project" value="UniProtKB-UniRule"/>
</dbReference>
<dbReference type="GO" id="GO:0051085">
    <property type="term" value="P:chaperone cofactor-dependent protein refolding"/>
    <property type="evidence" value="ECO:0007669"/>
    <property type="project" value="TreeGrafter"/>
</dbReference>
<dbReference type="GO" id="GO:0006260">
    <property type="term" value="P:DNA replication"/>
    <property type="evidence" value="ECO:0007669"/>
    <property type="project" value="UniProtKB-KW"/>
</dbReference>
<dbReference type="GO" id="GO:0042026">
    <property type="term" value="P:protein refolding"/>
    <property type="evidence" value="ECO:0007669"/>
    <property type="project" value="TreeGrafter"/>
</dbReference>
<dbReference type="GO" id="GO:0009408">
    <property type="term" value="P:response to heat"/>
    <property type="evidence" value="ECO:0007669"/>
    <property type="project" value="InterPro"/>
</dbReference>
<dbReference type="CDD" id="cd06257">
    <property type="entry name" value="DnaJ"/>
    <property type="match status" value="1"/>
</dbReference>
<dbReference type="CDD" id="cd10747">
    <property type="entry name" value="DnaJ_C"/>
    <property type="match status" value="1"/>
</dbReference>
<dbReference type="CDD" id="cd10719">
    <property type="entry name" value="DnaJ_zf"/>
    <property type="match status" value="1"/>
</dbReference>
<dbReference type="FunFam" id="1.10.287.110:FF:000003">
    <property type="entry name" value="Molecular chaperone DnaJ"/>
    <property type="match status" value="1"/>
</dbReference>
<dbReference type="FunFam" id="2.10.230.10:FF:000002">
    <property type="entry name" value="Molecular chaperone DnaJ"/>
    <property type="match status" value="1"/>
</dbReference>
<dbReference type="FunFam" id="2.60.260.20:FF:000004">
    <property type="entry name" value="Molecular chaperone DnaJ"/>
    <property type="match status" value="1"/>
</dbReference>
<dbReference type="Gene3D" id="1.10.287.110">
    <property type="entry name" value="DnaJ domain"/>
    <property type="match status" value="1"/>
</dbReference>
<dbReference type="Gene3D" id="2.10.230.10">
    <property type="entry name" value="Heat shock protein DnaJ, cysteine-rich domain"/>
    <property type="match status" value="1"/>
</dbReference>
<dbReference type="Gene3D" id="2.60.260.20">
    <property type="entry name" value="Urease metallochaperone UreE, N-terminal domain"/>
    <property type="match status" value="2"/>
</dbReference>
<dbReference type="HAMAP" id="MF_01152">
    <property type="entry name" value="DnaJ"/>
    <property type="match status" value="1"/>
</dbReference>
<dbReference type="InterPro" id="IPR012724">
    <property type="entry name" value="DnaJ"/>
</dbReference>
<dbReference type="InterPro" id="IPR002939">
    <property type="entry name" value="DnaJ_C"/>
</dbReference>
<dbReference type="InterPro" id="IPR001623">
    <property type="entry name" value="DnaJ_domain"/>
</dbReference>
<dbReference type="InterPro" id="IPR018253">
    <property type="entry name" value="DnaJ_domain_CS"/>
</dbReference>
<dbReference type="InterPro" id="IPR008971">
    <property type="entry name" value="HSP40/DnaJ_pept-bd"/>
</dbReference>
<dbReference type="InterPro" id="IPR001305">
    <property type="entry name" value="HSP_DnaJ_Cys-rich_dom"/>
</dbReference>
<dbReference type="InterPro" id="IPR036410">
    <property type="entry name" value="HSP_DnaJ_Cys-rich_dom_sf"/>
</dbReference>
<dbReference type="InterPro" id="IPR036869">
    <property type="entry name" value="J_dom_sf"/>
</dbReference>
<dbReference type="NCBIfam" id="TIGR02349">
    <property type="entry name" value="DnaJ_bact"/>
    <property type="match status" value="1"/>
</dbReference>
<dbReference type="NCBIfam" id="NF008035">
    <property type="entry name" value="PRK10767.1"/>
    <property type="match status" value="1"/>
</dbReference>
<dbReference type="PANTHER" id="PTHR43096:SF48">
    <property type="entry name" value="CHAPERONE PROTEIN DNAJ"/>
    <property type="match status" value="1"/>
</dbReference>
<dbReference type="PANTHER" id="PTHR43096">
    <property type="entry name" value="DNAJ HOMOLOG 1, MITOCHONDRIAL-RELATED"/>
    <property type="match status" value="1"/>
</dbReference>
<dbReference type="Pfam" id="PF00226">
    <property type="entry name" value="DnaJ"/>
    <property type="match status" value="1"/>
</dbReference>
<dbReference type="Pfam" id="PF01556">
    <property type="entry name" value="DnaJ_C"/>
    <property type="match status" value="1"/>
</dbReference>
<dbReference type="Pfam" id="PF00684">
    <property type="entry name" value="DnaJ_CXXCXGXG"/>
    <property type="match status" value="1"/>
</dbReference>
<dbReference type="PRINTS" id="PR00625">
    <property type="entry name" value="JDOMAIN"/>
</dbReference>
<dbReference type="SMART" id="SM00271">
    <property type="entry name" value="DnaJ"/>
    <property type="match status" value="1"/>
</dbReference>
<dbReference type="SUPFAM" id="SSF46565">
    <property type="entry name" value="Chaperone J-domain"/>
    <property type="match status" value="1"/>
</dbReference>
<dbReference type="SUPFAM" id="SSF57938">
    <property type="entry name" value="DnaJ/Hsp40 cysteine-rich domain"/>
    <property type="match status" value="1"/>
</dbReference>
<dbReference type="SUPFAM" id="SSF49493">
    <property type="entry name" value="HSP40/DnaJ peptide-binding domain"/>
    <property type="match status" value="2"/>
</dbReference>
<dbReference type="PROSITE" id="PS00636">
    <property type="entry name" value="DNAJ_1"/>
    <property type="match status" value="1"/>
</dbReference>
<dbReference type="PROSITE" id="PS50076">
    <property type="entry name" value="DNAJ_2"/>
    <property type="match status" value="1"/>
</dbReference>
<dbReference type="PROSITE" id="PS51188">
    <property type="entry name" value="ZF_CR"/>
    <property type="match status" value="1"/>
</dbReference>
<reference key="1">
    <citation type="journal article" date="1998" name="Mol. Gen. Genet.">
        <title>Cloning and characterization of the dnaK heat shock operon of the marine bacterium Vibrio harveyi.</title>
        <authorList>
            <person name="Klein G."/>
            <person name="Zmijewski M."/>
            <person name="Krzewska J."/>
            <person name="Czeczatka M."/>
            <person name="Lipinska B."/>
        </authorList>
    </citation>
    <scope>NUCLEOTIDE SEQUENCE [GENOMIC DNA]</scope>
</reference>